<organism>
    <name type="scientific">Bos taurus</name>
    <name type="common">Bovine</name>
    <dbReference type="NCBI Taxonomy" id="9913"/>
    <lineage>
        <taxon>Eukaryota</taxon>
        <taxon>Metazoa</taxon>
        <taxon>Chordata</taxon>
        <taxon>Craniata</taxon>
        <taxon>Vertebrata</taxon>
        <taxon>Euteleostomi</taxon>
        <taxon>Mammalia</taxon>
        <taxon>Eutheria</taxon>
        <taxon>Laurasiatheria</taxon>
        <taxon>Artiodactyla</taxon>
        <taxon>Ruminantia</taxon>
        <taxon>Pecora</taxon>
        <taxon>Bovidae</taxon>
        <taxon>Bovinae</taxon>
        <taxon>Bos</taxon>
    </lineage>
</organism>
<evidence type="ECO:0000250" key="1">
    <source>
        <dbReference type="UniProtKB" id="P0CAP2"/>
    </source>
</evidence>
<evidence type="ECO:0000255" key="2"/>
<evidence type="ECO:0000256" key="3">
    <source>
        <dbReference type="SAM" id="MobiDB-lite"/>
    </source>
</evidence>
<evidence type="ECO:0000269" key="4">
    <source>
    </source>
</evidence>
<evidence type="ECO:0000305" key="5"/>
<keyword id="KW-0175">Coiled coil</keyword>
<keyword id="KW-0903">Direct protein sequencing</keyword>
<keyword id="KW-0240">DNA-directed RNA polymerase</keyword>
<keyword id="KW-0539">Nucleus</keyword>
<keyword id="KW-0597">Phosphoprotein</keyword>
<keyword id="KW-1185">Reference proteome</keyword>
<keyword id="KW-0804">Transcription</keyword>
<feature type="chain" id="PRO_0000326228" description="DNA-directed RNA polymerase II subunit GRINL1A">
    <location>
        <begin position="1"/>
        <end position="370"/>
    </location>
</feature>
<feature type="region of interest" description="Disordered" evidence="3">
    <location>
        <begin position="1"/>
        <end position="20"/>
    </location>
</feature>
<feature type="region of interest" description="Important for transcription repressor activity" evidence="1">
    <location>
        <begin position="29"/>
        <end position="68"/>
    </location>
</feature>
<feature type="region of interest" description="Disordered" evidence="3">
    <location>
        <begin position="93"/>
        <end position="172"/>
    </location>
</feature>
<feature type="region of interest" description="Disordered" evidence="3">
    <location>
        <begin position="204"/>
        <end position="226"/>
    </location>
</feature>
<feature type="region of interest" description="Interaction with Pol II" evidence="1">
    <location>
        <begin position="228"/>
        <end position="299"/>
    </location>
</feature>
<feature type="region of interest" description="Disordered" evidence="3">
    <location>
        <begin position="241"/>
        <end position="283"/>
    </location>
</feature>
<feature type="region of interest" description="Important for transcription repressor activity" evidence="1">
    <location>
        <begin position="300"/>
        <end position="315"/>
    </location>
</feature>
<feature type="region of interest" description="Interaction with Pol II" evidence="1">
    <location>
        <begin position="316"/>
        <end position="341"/>
    </location>
</feature>
<feature type="region of interest" description="Disordered" evidence="3">
    <location>
        <begin position="340"/>
        <end position="370"/>
    </location>
</feature>
<feature type="coiled-coil region" evidence="2">
    <location>
        <begin position="15"/>
        <end position="69"/>
    </location>
</feature>
<feature type="coiled-coil region" evidence="2">
    <location>
        <begin position="303"/>
        <end position="328"/>
    </location>
</feature>
<feature type="compositionally biased region" description="Polar residues" evidence="3">
    <location>
        <begin position="101"/>
        <end position="131"/>
    </location>
</feature>
<feature type="compositionally biased region" description="Basic and acidic residues" evidence="3">
    <location>
        <begin position="138"/>
        <end position="152"/>
    </location>
</feature>
<feature type="compositionally biased region" description="Low complexity" evidence="3">
    <location>
        <begin position="155"/>
        <end position="170"/>
    </location>
</feature>
<feature type="compositionally biased region" description="Basic and acidic residues" evidence="3">
    <location>
        <begin position="205"/>
        <end position="214"/>
    </location>
</feature>
<feature type="compositionally biased region" description="Polar residues" evidence="3">
    <location>
        <begin position="254"/>
        <end position="266"/>
    </location>
</feature>
<feature type="compositionally biased region" description="Basic and acidic residues" evidence="3">
    <location>
        <begin position="349"/>
        <end position="358"/>
    </location>
</feature>
<feature type="compositionally biased region" description="Acidic residues" evidence="3">
    <location>
        <begin position="359"/>
        <end position="370"/>
    </location>
</feature>
<feature type="modified residue" description="Phosphoserine" evidence="1">
    <location>
        <position position="271"/>
    </location>
</feature>
<comment type="function">
    <text evidence="4">Appears to be a stable component of the Pol II(G) complex form of RNA polymerase II (Pol II). Pol II synthesizes mRNA precursors and many functional non-coding RNAs and is the central component of the basal RNA polymerase II transcription machinery. May play a role in Mediator complex-dependent regulation of transcription activation. Acts in vitro as a negative regulator of transcriptional activation; this repression is relieved by the Mediator complex, which restores Pol II(G) activator-dependent transcription to a level equivalent to that of Pol II.</text>
</comment>
<comment type="subunit">
    <text evidence="4">Component of the Pol II(G) complex, which contains the RNA polymerase II (Pol II) core complex subunits and POLR2M and appears to be an abundant form of Pol II.</text>
</comment>
<comment type="subcellular location">
    <subcellularLocation>
        <location evidence="5">Nucleus</location>
    </subcellularLocation>
</comment>
<comment type="PTM">
    <text evidence="1">Dephosphorylated at Ser-271 by the PNUTS-PP1 complex, promoting RNA polymerase II transcription pause-release.</text>
</comment>
<comment type="similarity">
    <text evidence="5">Belongs to the GRINL1 family.</text>
</comment>
<comment type="sequence caution" evidence="5">
    <conflict type="frameshift">
        <sequence resource="EMBL-CDS" id="AAI18413"/>
    </conflict>
</comment>
<sequence>MSSLPRGFEPQTPEDLGQRSLAELREMLKRQERLLRNVKFICKLPDKGKKISDAVTKLKAAIAEREEVRGRSELFYPVSLDCKERQKAIAVVDGDRDKAQNSDQILDTSSPVPGCSSVANITSSQTTSRQQGLAHPTRGGDAEAAEAEHTVSEHPTSSSGAPAPSSSQASEGLPQHCALGQVEDHPGSSDNLFIDRLQRITIADPTEHHSEGNRNPENLAGLWSGPQKKPHYMEVLEMRAKNPMPPPHKFKTNVLPSQPRDSSSACQRRGSPISSEERRRRDRKHLDDITAARLLPLHHLPTQLLSIEESLALQRQQKQSYEEIQAKLAAQKLAERLNIKMQSYNPEGESSRKYREVRDEDDDQSSEDEF</sequence>
<accession>Q17QE3</accession>
<protein>
    <recommendedName>
        <fullName>DNA-directed RNA polymerase II subunit GRINL1A</fullName>
    </recommendedName>
    <alternativeName>
        <fullName>DNA-directed RNA polymerase II subunit M</fullName>
    </alternativeName>
    <alternativeName>
        <fullName>GRINL1A downstream protein 1</fullName>
        <shortName>Gdown1</shortName>
    </alternativeName>
    <alternativeName>
        <fullName>Glutamate receptor-like protein 1A</fullName>
    </alternativeName>
</protein>
<reference key="1">
    <citation type="submission" date="2006-06" db="EMBL/GenBank/DDBJ databases">
        <authorList>
            <consortium name="NIH - Mammalian Gene Collection (MGC) project"/>
        </authorList>
    </citation>
    <scope>NUCLEOTIDE SEQUENCE [LARGE SCALE MRNA]</scope>
    <source>
        <strain>Hereford</strain>
        <tissue>Fetal pons</tissue>
    </source>
</reference>
<reference key="2">
    <citation type="journal article" date="2006" name="Proc. Natl. Acad. Sci. U.S.A.">
        <title>A Mediator-responsive form of metazoan RNA polymerase II.</title>
        <authorList>
            <person name="Hu X."/>
            <person name="Malik S."/>
            <person name="Negroiu C.C."/>
            <person name="Hubbard K."/>
            <person name="Velalar C.N."/>
            <person name="Hampton B."/>
            <person name="Grosu D."/>
            <person name="Catalano J."/>
            <person name="Roeder R.G."/>
            <person name="Gnatt A."/>
        </authorList>
    </citation>
    <scope>PROTEIN SEQUENCE OF 60-79 AND 323-349</scope>
    <scope>FUNCTION</scope>
    <scope>IDENTIFICATION IN THE POL II(G) COMPLEX</scope>
    <scope>IDENTIFICATION BY MASS SPECTROMETRY</scope>
</reference>
<dbReference type="EMBL" id="BC118412">
    <property type="protein sequence ID" value="AAI18413.1"/>
    <property type="status" value="ALT_FRAME"/>
    <property type="molecule type" value="mRNA"/>
</dbReference>
<dbReference type="RefSeq" id="NP_001098947.2">
    <property type="nucleotide sequence ID" value="NM_001105477.2"/>
</dbReference>
<dbReference type="RefSeq" id="XP_005211707.1">
    <property type="nucleotide sequence ID" value="XM_005211650.3"/>
</dbReference>
<dbReference type="SMR" id="Q17QE3"/>
<dbReference type="DIP" id="DIP-61185N"/>
<dbReference type="FunCoup" id="Q17QE3">
    <property type="interactions" value="2477"/>
</dbReference>
<dbReference type="IntAct" id="Q17QE3">
    <property type="interactions" value="1"/>
</dbReference>
<dbReference type="STRING" id="9913.ENSBTAP00000002841"/>
<dbReference type="PaxDb" id="9913-ENSBTAP00000056555"/>
<dbReference type="Ensembl" id="ENSBTAT00000110502.1">
    <property type="protein sequence ID" value="ENSBTAP00000074788.1"/>
    <property type="gene ID" value="ENSBTAG00000040384.4"/>
</dbReference>
<dbReference type="GeneID" id="100125877"/>
<dbReference type="KEGG" id="bta:100125877"/>
<dbReference type="CTD" id="81488"/>
<dbReference type="VEuPathDB" id="HostDB:ENSBTAG00000040384"/>
<dbReference type="VGNC" id="VGNC:55134">
    <property type="gene designation" value="POLR2M"/>
</dbReference>
<dbReference type="eggNOG" id="ENOG502S3HI">
    <property type="taxonomic scope" value="Eukaryota"/>
</dbReference>
<dbReference type="GeneTree" id="ENSGT00950000183065"/>
<dbReference type="HOGENOM" id="CLU_051512_0_0_1"/>
<dbReference type="InParanoid" id="Q17QE3"/>
<dbReference type="OMA" id="YQQAFAH"/>
<dbReference type="OrthoDB" id="2408655at2759"/>
<dbReference type="TreeFam" id="TF332945"/>
<dbReference type="Proteomes" id="UP000009136">
    <property type="component" value="Chromosome 10"/>
</dbReference>
<dbReference type="Bgee" id="ENSBTAG00000040384">
    <property type="expression patterns" value="Expressed in gluteal muscle and 111 other cell types or tissues"/>
</dbReference>
<dbReference type="GO" id="GO:0031674">
    <property type="term" value="C:I band"/>
    <property type="evidence" value="ECO:0000318"/>
    <property type="project" value="GO_Central"/>
</dbReference>
<dbReference type="GO" id="GO:0043025">
    <property type="term" value="C:neuronal cell body"/>
    <property type="evidence" value="ECO:0007669"/>
    <property type="project" value="Ensembl"/>
</dbReference>
<dbReference type="GO" id="GO:0005635">
    <property type="term" value="C:nuclear envelope"/>
    <property type="evidence" value="ECO:0007669"/>
    <property type="project" value="Ensembl"/>
</dbReference>
<dbReference type="GO" id="GO:0005665">
    <property type="term" value="C:RNA polymerase II, core complex"/>
    <property type="evidence" value="ECO:0000318"/>
    <property type="project" value="GO_Central"/>
</dbReference>
<dbReference type="GO" id="GO:0097550">
    <property type="term" value="C:transcription preinitiation complex"/>
    <property type="evidence" value="ECO:0000250"/>
    <property type="project" value="UniProtKB"/>
</dbReference>
<dbReference type="GO" id="GO:0000993">
    <property type="term" value="F:RNA polymerase II complex binding"/>
    <property type="evidence" value="ECO:0007669"/>
    <property type="project" value="Ensembl"/>
</dbReference>
<dbReference type="GO" id="GO:0003711">
    <property type="term" value="F:transcription elongation factor activity"/>
    <property type="evidence" value="ECO:0007669"/>
    <property type="project" value="InterPro"/>
</dbReference>
<dbReference type="GO" id="GO:0051685">
    <property type="term" value="P:maintenance of ER location"/>
    <property type="evidence" value="ECO:0000318"/>
    <property type="project" value="GO_Central"/>
</dbReference>
<dbReference type="GO" id="GO:0006368">
    <property type="term" value="P:transcription elongation by RNA polymerase II"/>
    <property type="evidence" value="ECO:0007669"/>
    <property type="project" value="InterPro"/>
</dbReference>
<dbReference type="InterPro" id="IPR026213">
    <property type="entry name" value="GRINL1"/>
</dbReference>
<dbReference type="InterPro" id="IPR051375">
    <property type="entry name" value="Tuftelin_GRINL1A/MYZAP/CCD68"/>
</dbReference>
<dbReference type="PANTHER" id="PTHR23171:SF5">
    <property type="entry name" value="DNA-DIRECTED RNA POLYMERASE II SUBUNIT GRINL1A"/>
    <property type="match status" value="1"/>
</dbReference>
<dbReference type="PANTHER" id="PTHR23171">
    <property type="entry name" value="GDOWN1"/>
    <property type="match status" value="1"/>
</dbReference>
<dbReference type="Pfam" id="PF15328">
    <property type="entry name" value="GCOM2"/>
    <property type="match status" value="1"/>
</dbReference>
<dbReference type="PRINTS" id="PR02085">
    <property type="entry name" value="POLR2GRINL1"/>
</dbReference>
<proteinExistence type="evidence at protein level"/>
<name>GRL1A_BOVIN</name>
<gene>
    <name type="primary">POLR2M</name>
    <name type="synonym">GRINL1A</name>
</gene>